<sequence>MTAKPTIAFSHLGCEKNRIDTEHMIGLLAEAGYGIDANEALADVVVVNTCSFIQAAREESVRTLVELAESGKKIVIAGCLAQHFQDQLLAELPEAIALVGTGDYHRIVDVLQRTESGERVNAISQEPSFIADENLPRYRTTTSAVAYLRVAEGCDYRCAFCIIPHLRGKQRSRSIESIVAEAKQLAAEGVQELVLISQITTNYGLDRYGKPMLAELLRQLGQVDVPWIRIHYAYPTGLTPEVIAAIRETHNVLPYLDLPLQHSHPEILKAMNRPWQGNVNDRIIEKLKEALPDAVLRTTFIAGFPGETEEHFRHLQQFIQRHEFDHVGVFAFSPEEGTAAIDLPNPVPDDVKEARRDALMATQQPIAERRNRAQIGRLVDVLIEQEHPSTGLKIGRSARFAPEVDGVVYVQGDAALGQLVTVRITDADIYDLHGEVASAADLFQASRQPSLA</sequence>
<name>RIMO_SYNE7</name>
<proteinExistence type="inferred from homology"/>
<keyword id="KW-0004">4Fe-4S</keyword>
<keyword id="KW-0963">Cytoplasm</keyword>
<keyword id="KW-0408">Iron</keyword>
<keyword id="KW-0411">Iron-sulfur</keyword>
<keyword id="KW-0479">Metal-binding</keyword>
<keyword id="KW-1185">Reference proteome</keyword>
<keyword id="KW-0949">S-adenosyl-L-methionine</keyword>
<keyword id="KW-0808">Transferase</keyword>
<feature type="chain" id="PRO_0000375029" description="Ribosomal protein uS12 methylthiotransferase RimO">
    <location>
        <begin position="1"/>
        <end position="452"/>
    </location>
</feature>
<feature type="domain" description="MTTase N-terminal" evidence="1">
    <location>
        <begin position="5"/>
        <end position="116"/>
    </location>
</feature>
<feature type="domain" description="Radical SAM core" evidence="2">
    <location>
        <begin position="140"/>
        <end position="369"/>
    </location>
</feature>
<feature type="domain" description="TRAM" evidence="1">
    <location>
        <begin position="372"/>
        <end position="438"/>
    </location>
</feature>
<feature type="binding site" evidence="1">
    <location>
        <position position="14"/>
    </location>
    <ligand>
        <name>[4Fe-4S] cluster</name>
        <dbReference type="ChEBI" id="CHEBI:49883"/>
        <label>1</label>
    </ligand>
</feature>
<feature type="binding site" evidence="1">
    <location>
        <position position="50"/>
    </location>
    <ligand>
        <name>[4Fe-4S] cluster</name>
        <dbReference type="ChEBI" id="CHEBI:49883"/>
        <label>1</label>
    </ligand>
</feature>
<feature type="binding site" evidence="1">
    <location>
        <position position="79"/>
    </location>
    <ligand>
        <name>[4Fe-4S] cluster</name>
        <dbReference type="ChEBI" id="CHEBI:49883"/>
        <label>1</label>
    </ligand>
</feature>
<feature type="binding site" evidence="1">
    <location>
        <position position="154"/>
    </location>
    <ligand>
        <name>[4Fe-4S] cluster</name>
        <dbReference type="ChEBI" id="CHEBI:49883"/>
        <label>2</label>
        <note>4Fe-4S-S-AdoMet</note>
    </ligand>
</feature>
<feature type="binding site" evidence="1">
    <location>
        <position position="158"/>
    </location>
    <ligand>
        <name>[4Fe-4S] cluster</name>
        <dbReference type="ChEBI" id="CHEBI:49883"/>
        <label>2</label>
        <note>4Fe-4S-S-AdoMet</note>
    </ligand>
</feature>
<feature type="binding site" evidence="1">
    <location>
        <position position="161"/>
    </location>
    <ligand>
        <name>[4Fe-4S] cluster</name>
        <dbReference type="ChEBI" id="CHEBI:49883"/>
        <label>2</label>
        <note>4Fe-4S-S-AdoMet</note>
    </ligand>
</feature>
<organism>
    <name type="scientific">Synechococcus elongatus (strain ATCC 33912 / PCC 7942 / FACHB-805)</name>
    <name type="common">Anacystis nidulans R2</name>
    <dbReference type="NCBI Taxonomy" id="1140"/>
    <lineage>
        <taxon>Bacteria</taxon>
        <taxon>Bacillati</taxon>
        <taxon>Cyanobacteriota</taxon>
        <taxon>Cyanophyceae</taxon>
        <taxon>Synechococcales</taxon>
        <taxon>Synechococcaceae</taxon>
        <taxon>Synechococcus</taxon>
    </lineage>
</organism>
<comment type="function">
    <text evidence="1">Catalyzes the methylthiolation of an aspartic acid residue of ribosomal protein uS12.</text>
</comment>
<comment type="catalytic activity">
    <reaction evidence="1">
        <text>L-aspartate(89)-[ribosomal protein uS12]-hydrogen + (sulfur carrier)-SH + AH2 + 2 S-adenosyl-L-methionine = 3-methylsulfanyl-L-aspartate(89)-[ribosomal protein uS12]-hydrogen + (sulfur carrier)-H + 5'-deoxyadenosine + L-methionine + A + S-adenosyl-L-homocysteine + 2 H(+)</text>
        <dbReference type="Rhea" id="RHEA:37087"/>
        <dbReference type="Rhea" id="RHEA-COMP:10460"/>
        <dbReference type="Rhea" id="RHEA-COMP:10461"/>
        <dbReference type="Rhea" id="RHEA-COMP:14737"/>
        <dbReference type="Rhea" id="RHEA-COMP:14739"/>
        <dbReference type="ChEBI" id="CHEBI:13193"/>
        <dbReference type="ChEBI" id="CHEBI:15378"/>
        <dbReference type="ChEBI" id="CHEBI:17319"/>
        <dbReference type="ChEBI" id="CHEBI:17499"/>
        <dbReference type="ChEBI" id="CHEBI:29917"/>
        <dbReference type="ChEBI" id="CHEBI:29961"/>
        <dbReference type="ChEBI" id="CHEBI:57844"/>
        <dbReference type="ChEBI" id="CHEBI:57856"/>
        <dbReference type="ChEBI" id="CHEBI:59789"/>
        <dbReference type="ChEBI" id="CHEBI:64428"/>
        <dbReference type="ChEBI" id="CHEBI:73599"/>
        <dbReference type="EC" id="2.8.4.4"/>
    </reaction>
</comment>
<comment type="cofactor">
    <cofactor evidence="1">
        <name>[4Fe-4S] cluster</name>
        <dbReference type="ChEBI" id="CHEBI:49883"/>
    </cofactor>
    <text evidence="1">Binds 2 [4Fe-4S] clusters. One cluster is coordinated with 3 cysteines and an exchangeable S-adenosyl-L-methionine.</text>
</comment>
<comment type="subcellular location">
    <subcellularLocation>
        <location evidence="1">Cytoplasm</location>
    </subcellularLocation>
</comment>
<comment type="similarity">
    <text evidence="1">Belongs to the methylthiotransferase family. RimO subfamily.</text>
</comment>
<accession>Q935Y2</accession>
<protein>
    <recommendedName>
        <fullName evidence="1">Ribosomal protein uS12 methylthiotransferase RimO</fullName>
        <shortName evidence="1">uS12 MTTase</shortName>
        <shortName evidence="1">uS12 methylthiotransferase</shortName>
        <ecNumber evidence="1">2.8.4.4</ecNumber>
    </recommendedName>
    <alternativeName>
        <fullName evidence="1">Ribosomal protein uS12 (aspartate-C(3))-methylthiotransferase</fullName>
    </alternativeName>
    <alternativeName>
        <fullName evidence="1">Ribosome maturation factor RimO</fullName>
    </alternativeName>
</protein>
<evidence type="ECO:0000255" key="1">
    <source>
        <dbReference type="HAMAP-Rule" id="MF_01865"/>
    </source>
</evidence>
<evidence type="ECO:0000255" key="2">
    <source>
        <dbReference type="PROSITE-ProRule" id="PRU01266"/>
    </source>
</evidence>
<dbReference type="EC" id="2.8.4.4" evidence="1"/>
<dbReference type="EMBL" id="U30252">
    <property type="protein sequence ID" value="AAL03926.1"/>
    <property type="molecule type" value="Genomic_DNA"/>
</dbReference>
<dbReference type="EMBL" id="CP000100">
    <property type="protein sequence ID" value="ABB58542.1"/>
    <property type="molecule type" value="Genomic_DNA"/>
</dbReference>
<dbReference type="RefSeq" id="WP_011378495.1">
    <property type="nucleotide sequence ID" value="NZ_JACJTX010000001.1"/>
</dbReference>
<dbReference type="SMR" id="Q935Y2"/>
<dbReference type="STRING" id="1140.Synpcc7942_2512"/>
<dbReference type="PaxDb" id="1140-Synpcc7942_2512"/>
<dbReference type="GeneID" id="72431402"/>
<dbReference type="KEGG" id="syf:Synpcc7942_2512"/>
<dbReference type="eggNOG" id="COG0621">
    <property type="taxonomic scope" value="Bacteria"/>
</dbReference>
<dbReference type="HOGENOM" id="CLU_018697_0_1_3"/>
<dbReference type="OrthoDB" id="9805215at2"/>
<dbReference type="BioCyc" id="SYNEL:SYNPCC7942_2512-MONOMER"/>
<dbReference type="Proteomes" id="UP000889800">
    <property type="component" value="Chromosome"/>
</dbReference>
<dbReference type="GO" id="GO:0005829">
    <property type="term" value="C:cytosol"/>
    <property type="evidence" value="ECO:0007669"/>
    <property type="project" value="TreeGrafter"/>
</dbReference>
<dbReference type="GO" id="GO:0051539">
    <property type="term" value="F:4 iron, 4 sulfur cluster binding"/>
    <property type="evidence" value="ECO:0007669"/>
    <property type="project" value="UniProtKB-UniRule"/>
</dbReference>
<dbReference type="GO" id="GO:0035599">
    <property type="term" value="F:aspartic acid methylthiotransferase activity"/>
    <property type="evidence" value="ECO:0007669"/>
    <property type="project" value="TreeGrafter"/>
</dbReference>
<dbReference type="GO" id="GO:0046872">
    <property type="term" value="F:metal ion binding"/>
    <property type="evidence" value="ECO:0007669"/>
    <property type="project" value="UniProtKB-KW"/>
</dbReference>
<dbReference type="GO" id="GO:0103039">
    <property type="term" value="F:protein methylthiotransferase activity"/>
    <property type="evidence" value="ECO:0007669"/>
    <property type="project" value="UniProtKB-EC"/>
</dbReference>
<dbReference type="GO" id="GO:0006400">
    <property type="term" value="P:tRNA modification"/>
    <property type="evidence" value="ECO:0007669"/>
    <property type="project" value="InterPro"/>
</dbReference>
<dbReference type="CDD" id="cd01335">
    <property type="entry name" value="Radical_SAM"/>
    <property type="match status" value="1"/>
</dbReference>
<dbReference type="FunFam" id="3.80.30.20:FF:000001">
    <property type="entry name" value="tRNA-2-methylthio-N(6)-dimethylallyladenosine synthase 2"/>
    <property type="match status" value="1"/>
</dbReference>
<dbReference type="Gene3D" id="3.40.50.12160">
    <property type="entry name" value="Methylthiotransferase, N-terminal domain"/>
    <property type="match status" value="1"/>
</dbReference>
<dbReference type="Gene3D" id="2.40.50.140">
    <property type="entry name" value="Nucleic acid-binding proteins"/>
    <property type="match status" value="1"/>
</dbReference>
<dbReference type="Gene3D" id="3.80.30.20">
    <property type="entry name" value="tm_1862 like domain"/>
    <property type="match status" value="1"/>
</dbReference>
<dbReference type="HAMAP" id="MF_01865">
    <property type="entry name" value="MTTase_RimO"/>
    <property type="match status" value="1"/>
</dbReference>
<dbReference type="InterPro" id="IPR006638">
    <property type="entry name" value="Elp3/MiaA/NifB-like_rSAM"/>
</dbReference>
<dbReference type="InterPro" id="IPR005839">
    <property type="entry name" value="Methylthiotransferase"/>
</dbReference>
<dbReference type="InterPro" id="IPR020612">
    <property type="entry name" value="Methylthiotransferase_CS"/>
</dbReference>
<dbReference type="InterPro" id="IPR013848">
    <property type="entry name" value="Methylthiotransferase_N"/>
</dbReference>
<dbReference type="InterPro" id="IPR038135">
    <property type="entry name" value="Methylthiotransferase_N_sf"/>
</dbReference>
<dbReference type="InterPro" id="IPR012340">
    <property type="entry name" value="NA-bd_OB-fold"/>
</dbReference>
<dbReference type="InterPro" id="IPR005840">
    <property type="entry name" value="Ribosomal_uS12_MeSTrfase_RimO"/>
</dbReference>
<dbReference type="InterPro" id="IPR007197">
    <property type="entry name" value="rSAM"/>
</dbReference>
<dbReference type="InterPro" id="IPR023404">
    <property type="entry name" value="rSAM_horseshoe"/>
</dbReference>
<dbReference type="InterPro" id="IPR002792">
    <property type="entry name" value="TRAM_dom"/>
</dbReference>
<dbReference type="NCBIfam" id="TIGR01125">
    <property type="entry name" value="30S ribosomal protein S12 methylthiotransferase RimO"/>
    <property type="match status" value="1"/>
</dbReference>
<dbReference type="NCBIfam" id="TIGR00089">
    <property type="entry name" value="MiaB/RimO family radical SAM methylthiotransferase"/>
    <property type="match status" value="1"/>
</dbReference>
<dbReference type="PANTHER" id="PTHR43837">
    <property type="entry name" value="RIBOSOMAL PROTEIN S12 METHYLTHIOTRANSFERASE RIMO"/>
    <property type="match status" value="1"/>
</dbReference>
<dbReference type="PANTHER" id="PTHR43837:SF1">
    <property type="entry name" value="RIBOSOMAL PROTEIN US12 METHYLTHIOTRANSFERASE RIMO"/>
    <property type="match status" value="1"/>
</dbReference>
<dbReference type="Pfam" id="PF04055">
    <property type="entry name" value="Radical_SAM"/>
    <property type="match status" value="1"/>
</dbReference>
<dbReference type="Pfam" id="PF18693">
    <property type="entry name" value="TRAM_2"/>
    <property type="match status" value="1"/>
</dbReference>
<dbReference type="Pfam" id="PF00919">
    <property type="entry name" value="UPF0004"/>
    <property type="match status" value="1"/>
</dbReference>
<dbReference type="SFLD" id="SFLDG01082">
    <property type="entry name" value="B12-binding_domain_containing"/>
    <property type="match status" value="1"/>
</dbReference>
<dbReference type="SFLD" id="SFLDS00029">
    <property type="entry name" value="Radical_SAM"/>
    <property type="match status" value="1"/>
</dbReference>
<dbReference type="SFLD" id="SFLDF00274">
    <property type="entry name" value="ribosomal_protein_S12_methylth"/>
    <property type="match status" value="1"/>
</dbReference>
<dbReference type="SMART" id="SM00729">
    <property type="entry name" value="Elp3"/>
    <property type="match status" value="1"/>
</dbReference>
<dbReference type="SUPFAM" id="SSF102114">
    <property type="entry name" value="Radical SAM enzymes"/>
    <property type="match status" value="1"/>
</dbReference>
<dbReference type="PROSITE" id="PS51449">
    <property type="entry name" value="MTTASE_N"/>
    <property type="match status" value="1"/>
</dbReference>
<dbReference type="PROSITE" id="PS01278">
    <property type="entry name" value="MTTASE_RADICAL"/>
    <property type="match status" value="1"/>
</dbReference>
<dbReference type="PROSITE" id="PS51918">
    <property type="entry name" value="RADICAL_SAM"/>
    <property type="match status" value="1"/>
</dbReference>
<dbReference type="PROSITE" id="PS50926">
    <property type="entry name" value="TRAM"/>
    <property type="match status" value="1"/>
</dbReference>
<gene>
    <name evidence="1" type="primary">rimO</name>
    <name type="ordered locus">Synpcc7942_2512</name>
</gene>
<reference key="1">
    <citation type="submission" date="2002-11" db="EMBL/GenBank/DDBJ databases">
        <title>Synechococcus elongatus PCC7942 genome sequence, cosmid 7H1 and 2E8.</title>
        <authorList>
            <person name="Holtman C.K."/>
            <person name="Socias T."/>
            <person name="Mohler B.J."/>
            <person name="Chen Y."/>
            <person name="Min H."/>
            <person name="Golden S.S."/>
            <person name="Youderian P."/>
            <person name="Sandoval P."/>
            <person name="Gonzalez A."/>
            <person name="Salinas I."/>
        </authorList>
    </citation>
    <scope>NUCLEOTIDE SEQUENCE [GENOMIC DNA]</scope>
</reference>
<reference key="2">
    <citation type="submission" date="2005-08" db="EMBL/GenBank/DDBJ databases">
        <title>Complete sequence of chromosome 1 of Synechococcus elongatus PCC 7942.</title>
        <authorList>
            <consortium name="US DOE Joint Genome Institute"/>
            <person name="Copeland A."/>
            <person name="Lucas S."/>
            <person name="Lapidus A."/>
            <person name="Barry K."/>
            <person name="Detter J.C."/>
            <person name="Glavina T."/>
            <person name="Hammon N."/>
            <person name="Israni S."/>
            <person name="Pitluck S."/>
            <person name="Schmutz J."/>
            <person name="Larimer F."/>
            <person name="Land M."/>
            <person name="Kyrpides N."/>
            <person name="Lykidis A."/>
            <person name="Golden S."/>
            <person name="Richardson P."/>
        </authorList>
    </citation>
    <scope>NUCLEOTIDE SEQUENCE [LARGE SCALE GENOMIC DNA]</scope>
    <source>
        <strain>ATCC 33912 / PCC 7942 / FACHB-805</strain>
    </source>
</reference>